<sequence length="237" mass="26036">MDLLLGIVQGLTEFLPISSSGHLTLLSHLLKTDLNAYQTAVLHLGTLVSVVLFALDGIRRSLRSWRIILNLIVSTIPAGVFGVLFEKQIDQLFSSPRFLPLFFSATALILMFTRYSSSGEKRMENMSFLDALLVGIAQLFALFPGISRSGITVSSLLFMKYRSEDALQYSFLMSIPVVLGAGILGLGKGNVTILAPIFAFLSGLFALYVLSRSVRSGKIWQFSYYCLFVAILSYLAG</sequence>
<gene>
    <name evidence="1" type="primary">uppP</name>
    <name type="synonym">bacA</name>
    <name type="synonym">upk</name>
    <name type="ordered locus">TM_0893</name>
</gene>
<proteinExistence type="inferred from homology"/>
<evidence type="ECO:0000255" key="1">
    <source>
        <dbReference type="HAMAP-Rule" id="MF_01006"/>
    </source>
</evidence>
<comment type="function">
    <text evidence="1">Catalyzes the dephosphorylation of undecaprenyl diphosphate (UPP). Confers resistance to bacitracin.</text>
</comment>
<comment type="catalytic activity">
    <reaction evidence="1">
        <text>di-trans,octa-cis-undecaprenyl diphosphate + H2O = di-trans,octa-cis-undecaprenyl phosphate + phosphate + H(+)</text>
        <dbReference type="Rhea" id="RHEA:28094"/>
        <dbReference type="ChEBI" id="CHEBI:15377"/>
        <dbReference type="ChEBI" id="CHEBI:15378"/>
        <dbReference type="ChEBI" id="CHEBI:43474"/>
        <dbReference type="ChEBI" id="CHEBI:58405"/>
        <dbReference type="ChEBI" id="CHEBI:60392"/>
        <dbReference type="EC" id="3.6.1.27"/>
    </reaction>
</comment>
<comment type="subcellular location">
    <subcellularLocation>
        <location evidence="1">Cell inner membrane</location>
        <topology evidence="1">Multi-pass membrane protein</topology>
    </subcellularLocation>
</comment>
<comment type="miscellaneous">
    <text>Bacitracin is thought to be involved in the inhibition of peptidoglycan synthesis by sequestering undecaprenyl diphosphate, thereby reducing the pool of lipid carrier available.</text>
</comment>
<comment type="similarity">
    <text evidence="1">Belongs to the UppP family.</text>
</comment>
<reference key="1">
    <citation type="journal article" date="1999" name="Nature">
        <title>Evidence for lateral gene transfer between Archaea and Bacteria from genome sequence of Thermotoga maritima.</title>
        <authorList>
            <person name="Nelson K.E."/>
            <person name="Clayton R.A."/>
            <person name="Gill S.R."/>
            <person name="Gwinn M.L."/>
            <person name="Dodson R.J."/>
            <person name="Haft D.H."/>
            <person name="Hickey E.K."/>
            <person name="Peterson J.D."/>
            <person name="Nelson W.C."/>
            <person name="Ketchum K.A."/>
            <person name="McDonald L.A."/>
            <person name="Utterback T.R."/>
            <person name="Malek J.A."/>
            <person name="Linher K.D."/>
            <person name="Garrett M.M."/>
            <person name="Stewart A.M."/>
            <person name="Cotton M.D."/>
            <person name="Pratt M.S."/>
            <person name="Phillips C.A."/>
            <person name="Richardson D.L."/>
            <person name="Heidelberg J.F."/>
            <person name="Sutton G.G."/>
            <person name="Fleischmann R.D."/>
            <person name="Eisen J.A."/>
            <person name="White O."/>
            <person name="Salzberg S.L."/>
            <person name="Smith H.O."/>
            <person name="Venter J.C."/>
            <person name="Fraser C.M."/>
        </authorList>
    </citation>
    <scope>NUCLEOTIDE SEQUENCE [LARGE SCALE GENOMIC DNA]</scope>
    <source>
        <strain>ATCC 43589 / DSM 3109 / JCM 10099 / NBRC 100826 / MSB8</strain>
    </source>
</reference>
<accession>Q9WZZ5</accession>
<organism>
    <name type="scientific">Thermotoga maritima (strain ATCC 43589 / DSM 3109 / JCM 10099 / NBRC 100826 / MSB8)</name>
    <dbReference type="NCBI Taxonomy" id="243274"/>
    <lineage>
        <taxon>Bacteria</taxon>
        <taxon>Thermotogati</taxon>
        <taxon>Thermotogota</taxon>
        <taxon>Thermotogae</taxon>
        <taxon>Thermotogales</taxon>
        <taxon>Thermotogaceae</taxon>
        <taxon>Thermotoga</taxon>
    </lineage>
</organism>
<protein>
    <recommendedName>
        <fullName evidence="1">Undecaprenyl-diphosphatase</fullName>
        <ecNumber evidence="1">3.6.1.27</ecNumber>
    </recommendedName>
    <alternativeName>
        <fullName evidence="1">Bacitracin resistance protein</fullName>
    </alternativeName>
    <alternativeName>
        <fullName evidence="1">Undecaprenyl pyrophosphate phosphatase</fullName>
    </alternativeName>
</protein>
<dbReference type="EC" id="3.6.1.27" evidence="1"/>
<dbReference type="EMBL" id="AE000512">
    <property type="protein sequence ID" value="AAD35974.1"/>
    <property type="molecule type" value="Genomic_DNA"/>
</dbReference>
<dbReference type="PIR" id="F72321">
    <property type="entry name" value="F72321"/>
</dbReference>
<dbReference type="RefSeq" id="NP_228701.1">
    <property type="nucleotide sequence ID" value="NC_000853.1"/>
</dbReference>
<dbReference type="RefSeq" id="WP_004080690.1">
    <property type="nucleotide sequence ID" value="NZ_CP011107.1"/>
</dbReference>
<dbReference type="SMR" id="Q9WZZ5"/>
<dbReference type="FunCoup" id="Q9WZZ5">
    <property type="interactions" value="272"/>
</dbReference>
<dbReference type="STRING" id="243274.TM_0893"/>
<dbReference type="PaxDb" id="243274-THEMA_00170"/>
<dbReference type="EnsemblBacteria" id="AAD35974">
    <property type="protein sequence ID" value="AAD35974"/>
    <property type="gene ID" value="TM_0893"/>
</dbReference>
<dbReference type="KEGG" id="tma:TM0893"/>
<dbReference type="KEGG" id="tmi:THEMA_00170"/>
<dbReference type="KEGG" id="tmm:Tmari_0895"/>
<dbReference type="KEGG" id="tmw:THMA_0915"/>
<dbReference type="eggNOG" id="COG1968">
    <property type="taxonomic scope" value="Bacteria"/>
</dbReference>
<dbReference type="InParanoid" id="Q9WZZ5"/>
<dbReference type="OrthoDB" id="9808289at2"/>
<dbReference type="Proteomes" id="UP000008183">
    <property type="component" value="Chromosome"/>
</dbReference>
<dbReference type="GO" id="GO:0005886">
    <property type="term" value="C:plasma membrane"/>
    <property type="evidence" value="ECO:0000318"/>
    <property type="project" value="GO_Central"/>
</dbReference>
<dbReference type="GO" id="GO:0050380">
    <property type="term" value="F:undecaprenyl-diphosphatase activity"/>
    <property type="evidence" value="ECO:0000318"/>
    <property type="project" value="GO_Central"/>
</dbReference>
<dbReference type="GO" id="GO:0071555">
    <property type="term" value="P:cell wall organization"/>
    <property type="evidence" value="ECO:0007669"/>
    <property type="project" value="UniProtKB-KW"/>
</dbReference>
<dbReference type="GO" id="GO:0009252">
    <property type="term" value="P:peptidoglycan biosynthetic process"/>
    <property type="evidence" value="ECO:0007669"/>
    <property type="project" value="UniProtKB-KW"/>
</dbReference>
<dbReference type="GO" id="GO:0000270">
    <property type="term" value="P:peptidoglycan metabolic process"/>
    <property type="evidence" value="ECO:0000318"/>
    <property type="project" value="GO_Central"/>
</dbReference>
<dbReference type="GO" id="GO:0008360">
    <property type="term" value="P:regulation of cell shape"/>
    <property type="evidence" value="ECO:0007669"/>
    <property type="project" value="UniProtKB-KW"/>
</dbReference>
<dbReference type="GO" id="GO:0046677">
    <property type="term" value="P:response to antibiotic"/>
    <property type="evidence" value="ECO:0007669"/>
    <property type="project" value="UniProtKB-UniRule"/>
</dbReference>
<dbReference type="HAMAP" id="MF_01006">
    <property type="entry name" value="Undec_diphosphatase"/>
    <property type="match status" value="1"/>
</dbReference>
<dbReference type="InterPro" id="IPR003824">
    <property type="entry name" value="UppP"/>
</dbReference>
<dbReference type="PANTHER" id="PTHR30622">
    <property type="entry name" value="UNDECAPRENYL-DIPHOSPHATASE"/>
    <property type="match status" value="1"/>
</dbReference>
<dbReference type="PANTHER" id="PTHR30622:SF4">
    <property type="entry name" value="UNDECAPRENYL-DIPHOSPHATASE"/>
    <property type="match status" value="1"/>
</dbReference>
<dbReference type="Pfam" id="PF02673">
    <property type="entry name" value="BacA"/>
    <property type="match status" value="1"/>
</dbReference>
<name>UPPP_THEMA</name>
<keyword id="KW-0046">Antibiotic resistance</keyword>
<keyword id="KW-0997">Cell inner membrane</keyword>
<keyword id="KW-1003">Cell membrane</keyword>
<keyword id="KW-0133">Cell shape</keyword>
<keyword id="KW-0961">Cell wall biogenesis/degradation</keyword>
<keyword id="KW-0378">Hydrolase</keyword>
<keyword id="KW-0472">Membrane</keyword>
<keyword id="KW-0573">Peptidoglycan synthesis</keyword>
<keyword id="KW-1185">Reference proteome</keyword>
<keyword id="KW-0812">Transmembrane</keyword>
<keyword id="KW-1133">Transmembrane helix</keyword>
<feature type="chain" id="PRO_0000151227" description="Undecaprenyl-diphosphatase">
    <location>
        <begin position="1"/>
        <end position="237"/>
    </location>
</feature>
<feature type="transmembrane region" description="Helical" evidence="1">
    <location>
        <begin position="38"/>
        <end position="58"/>
    </location>
</feature>
<feature type="transmembrane region" description="Helical" evidence="1">
    <location>
        <begin position="65"/>
        <end position="85"/>
    </location>
</feature>
<feature type="transmembrane region" description="Helical" evidence="1">
    <location>
        <begin position="92"/>
        <end position="112"/>
    </location>
</feature>
<feature type="transmembrane region" description="Helical" evidence="1">
    <location>
        <begin position="126"/>
        <end position="146"/>
    </location>
</feature>
<feature type="transmembrane region" description="Helical" evidence="1">
    <location>
        <begin position="166"/>
        <end position="186"/>
    </location>
</feature>
<feature type="transmembrane region" description="Helical" evidence="1">
    <location>
        <begin position="191"/>
        <end position="211"/>
    </location>
</feature>
<feature type="transmembrane region" description="Helical" evidence="1">
    <location>
        <begin position="217"/>
        <end position="237"/>
    </location>
</feature>